<evidence type="ECO:0000250" key="1">
    <source>
        <dbReference type="UniProtKB" id="Q568P9"/>
    </source>
</evidence>
<evidence type="ECO:0000250" key="2">
    <source>
        <dbReference type="UniProtKB" id="Q8CAE2"/>
    </source>
</evidence>
<evidence type="ECO:0000250" key="3">
    <source>
        <dbReference type="UniProtKB" id="Q9C5Q8"/>
    </source>
</evidence>
<evidence type="ECO:0000305" key="4"/>
<protein>
    <recommendedName>
        <fullName>Small RNA 2'-O-methyltransferase</fullName>
        <ecNumber evidence="2">2.1.1.386</ecNumber>
    </recommendedName>
    <alternativeName>
        <fullName>HEN1 methyltransferase homolog 1</fullName>
    </alternativeName>
</protein>
<keyword id="KW-0963">Cytoplasm</keyword>
<keyword id="KW-0460">Magnesium</keyword>
<keyword id="KW-0479">Metal-binding</keyword>
<keyword id="KW-0489">Methyltransferase</keyword>
<keyword id="KW-1185">Reference proteome</keyword>
<keyword id="KW-0694">RNA-binding</keyword>
<keyword id="KW-0943">RNA-mediated gene silencing</keyword>
<keyword id="KW-0949">S-adenosyl-L-methionine</keyword>
<keyword id="KW-0808">Transferase</keyword>
<sequence>MDKNFEGKQFTGVIKFTPPLYKQRYEFVQDLVRKYEPKKVADLGCADCTLLWMLKFCSCIEVLAGLDICETVMKEKMHRLTPLPADYLEPSERSLIVTLHQGSVAHKDPCMLGFDLVTCIELIEHLQESELEKFPEVVFGFMAPNMVVISTPNSEFNTLLPGVTVFRHPDHKFEWDRAQFQSWAQDTAERYEYSVEFTGVGSPPTGMEDVGFCTQIGVFVKKYPQTREPVQREKPTEAAYKTVFKAVYPSLKDEKYLQNAVVSEVMFRAQLIKRSLLDHLLSECEEYNDDPTERKLKLQCSVNCFSEDVETLAVEKSTEPFVSGNVIYIPLRKIFSVPKVNQLCGTFEKFCRLITGKVTLNSDSSALMLDTENEEN</sequence>
<proteinExistence type="inferred from homology"/>
<gene>
    <name type="primary">HENMT1</name>
</gene>
<reference key="1">
    <citation type="journal article" date="2004" name="Nature">
        <title>Sequence and comparative analysis of the chicken genome provide unique perspectives on vertebrate evolution.</title>
        <authorList>
            <person name="Hillier L.W."/>
            <person name="Miller W."/>
            <person name="Birney E."/>
            <person name="Warren W."/>
            <person name="Hardison R.C."/>
            <person name="Ponting C.P."/>
            <person name="Bork P."/>
            <person name="Burt D.W."/>
            <person name="Groenen M.A.M."/>
            <person name="Delany M.E."/>
            <person name="Dodgson J.B."/>
            <person name="Chinwalla A.T."/>
            <person name="Cliften P.F."/>
            <person name="Clifton S.W."/>
            <person name="Delehaunty K.D."/>
            <person name="Fronick C."/>
            <person name="Fulton R.S."/>
            <person name="Graves T.A."/>
            <person name="Kremitzki C."/>
            <person name="Layman D."/>
            <person name="Magrini V."/>
            <person name="McPherson J.D."/>
            <person name="Miner T.L."/>
            <person name="Minx P."/>
            <person name="Nash W.E."/>
            <person name="Nhan M.N."/>
            <person name="Nelson J.O."/>
            <person name="Oddy L.G."/>
            <person name="Pohl C.S."/>
            <person name="Randall-Maher J."/>
            <person name="Smith S.M."/>
            <person name="Wallis J.W."/>
            <person name="Yang S.-P."/>
            <person name="Romanov M.N."/>
            <person name="Rondelli C.M."/>
            <person name="Paton B."/>
            <person name="Smith J."/>
            <person name="Morrice D."/>
            <person name="Daniels L."/>
            <person name="Tempest H.G."/>
            <person name="Robertson L."/>
            <person name="Masabanda J.S."/>
            <person name="Griffin D.K."/>
            <person name="Vignal A."/>
            <person name="Fillon V."/>
            <person name="Jacobbson L."/>
            <person name="Kerje S."/>
            <person name="Andersson L."/>
            <person name="Crooijmans R.P."/>
            <person name="Aerts J."/>
            <person name="van der Poel J.J."/>
            <person name="Ellegren H."/>
            <person name="Caldwell R.B."/>
            <person name="Hubbard S.J."/>
            <person name="Grafham D.V."/>
            <person name="Kierzek A.M."/>
            <person name="McLaren S.R."/>
            <person name="Overton I.M."/>
            <person name="Arakawa H."/>
            <person name="Beattie K.J."/>
            <person name="Bezzubov Y."/>
            <person name="Boardman P.E."/>
            <person name="Bonfield J.K."/>
            <person name="Croning M.D.R."/>
            <person name="Davies R.M."/>
            <person name="Francis M.D."/>
            <person name="Humphray S.J."/>
            <person name="Scott C.E."/>
            <person name="Taylor R.G."/>
            <person name="Tickle C."/>
            <person name="Brown W.R.A."/>
            <person name="Rogers J."/>
            <person name="Buerstedde J.-M."/>
            <person name="Wilson S.A."/>
            <person name="Stubbs L."/>
            <person name="Ovcharenko I."/>
            <person name="Gordon L."/>
            <person name="Lucas S."/>
            <person name="Miller M.M."/>
            <person name="Inoko H."/>
            <person name="Shiina T."/>
            <person name="Kaufman J."/>
            <person name="Salomonsen J."/>
            <person name="Skjoedt K."/>
            <person name="Wong G.K.-S."/>
            <person name="Wang J."/>
            <person name="Liu B."/>
            <person name="Wang J."/>
            <person name="Yu J."/>
            <person name="Yang H."/>
            <person name="Nefedov M."/>
            <person name="Koriabine M."/>
            <person name="Dejong P.J."/>
            <person name="Goodstadt L."/>
            <person name="Webber C."/>
            <person name="Dickens N.J."/>
            <person name="Letunic I."/>
            <person name="Suyama M."/>
            <person name="Torrents D."/>
            <person name="von Mering C."/>
            <person name="Zdobnov E.M."/>
            <person name="Makova K."/>
            <person name="Nekrutenko A."/>
            <person name="Elnitski L."/>
            <person name="Eswara P."/>
            <person name="King D.C."/>
            <person name="Yang S.-P."/>
            <person name="Tyekucheva S."/>
            <person name="Radakrishnan A."/>
            <person name="Harris R.S."/>
            <person name="Chiaromonte F."/>
            <person name="Taylor J."/>
            <person name="He J."/>
            <person name="Rijnkels M."/>
            <person name="Griffiths-Jones S."/>
            <person name="Ureta-Vidal A."/>
            <person name="Hoffman M.M."/>
            <person name="Severin J."/>
            <person name="Searle S.M.J."/>
            <person name="Law A.S."/>
            <person name="Speed D."/>
            <person name="Waddington D."/>
            <person name="Cheng Z."/>
            <person name="Tuzun E."/>
            <person name="Eichler E."/>
            <person name="Bao Z."/>
            <person name="Flicek P."/>
            <person name="Shteynberg D.D."/>
            <person name="Brent M.R."/>
            <person name="Bye J.M."/>
            <person name="Huckle E.J."/>
            <person name="Chatterji S."/>
            <person name="Dewey C."/>
            <person name="Pachter L."/>
            <person name="Kouranov A."/>
            <person name="Mourelatos Z."/>
            <person name="Hatzigeorgiou A.G."/>
            <person name="Paterson A.H."/>
            <person name="Ivarie R."/>
            <person name="Brandstrom M."/>
            <person name="Axelsson E."/>
            <person name="Backstrom N."/>
            <person name="Berlin S."/>
            <person name="Webster M.T."/>
            <person name="Pourquie O."/>
            <person name="Reymond A."/>
            <person name="Ucla C."/>
            <person name="Antonarakis S.E."/>
            <person name="Long M."/>
            <person name="Emerson J.J."/>
            <person name="Betran E."/>
            <person name="Dupanloup I."/>
            <person name="Kaessmann H."/>
            <person name="Hinrichs A.S."/>
            <person name="Bejerano G."/>
            <person name="Furey T.S."/>
            <person name="Harte R.A."/>
            <person name="Raney B."/>
            <person name="Siepel A."/>
            <person name="Kent W.J."/>
            <person name="Haussler D."/>
            <person name="Eyras E."/>
            <person name="Castelo R."/>
            <person name="Abril J.F."/>
            <person name="Castellano S."/>
            <person name="Camara F."/>
            <person name="Parra G."/>
            <person name="Guigo R."/>
            <person name="Bourque G."/>
            <person name="Tesler G."/>
            <person name="Pevzner P.A."/>
            <person name="Smit A."/>
            <person name="Fulton L.A."/>
            <person name="Mardis E.R."/>
            <person name="Wilson R.K."/>
        </authorList>
    </citation>
    <scope>NUCLEOTIDE SEQUENCE [LARGE SCALE GENOMIC DNA]</scope>
    <source>
        <strain>Red jungle fowl</strain>
    </source>
</reference>
<organism>
    <name type="scientific">Gallus gallus</name>
    <name type="common">Chicken</name>
    <dbReference type="NCBI Taxonomy" id="9031"/>
    <lineage>
        <taxon>Eukaryota</taxon>
        <taxon>Metazoa</taxon>
        <taxon>Chordata</taxon>
        <taxon>Craniata</taxon>
        <taxon>Vertebrata</taxon>
        <taxon>Euteleostomi</taxon>
        <taxon>Archelosauria</taxon>
        <taxon>Archosauria</taxon>
        <taxon>Dinosauria</taxon>
        <taxon>Saurischia</taxon>
        <taxon>Theropoda</taxon>
        <taxon>Coelurosauria</taxon>
        <taxon>Aves</taxon>
        <taxon>Neognathae</taxon>
        <taxon>Galloanserae</taxon>
        <taxon>Galliformes</taxon>
        <taxon>Phasianidae</taxon>
        <taxon>Phasianinae</taxon>
        <taxon>Gallus</taxon>
    </lineage>
</organism>
<feature type="chain" id="PRO_0000406960" description="Small RNA 2'-O-methyltransferase">
    <location>
        <begin position="1"/>
        <end position="376"/>
    </location>
</feature>
<feature type="binding site" evidence="3">
    <location>
        <position position="49"/>
    </location>
    <ligand>
        <name>S-adenosyl-L-methionine</name>
        <dbReference type="ChEBI" id="CHEBI:59789"/>
    </ligand>
</feature>
<feature type="binding site" evidence="3">
    <location>
        <position position="67"/>
    </location>
    <ligand>
        <name>S-adenosyl-L-methionine</name>
        <dbReference type="ChEBI" id="CHEBI:59789"/>
    </ligand>
</feature>
<feature type="binding site" evidence="3">
    <location>
        <position position="103"/>
    </location>
    <ligand>
        <name>S-adenosyl-L-methionine</name>
        <dbReference type="ChEBI" id="CHEBI:59789"/>
    </ligand>
</feature>
<feature type="binding site" evidence="3">
    <location>
        <position position="121"/>
    </location>
    <ligand>
        <name>Mg(2+)</name>
        <dbReference type="ChEBI" id="CHEBI:18420"/>
    </ligand>
</feature>
<feature type="binding site" evidence="3">
    <location>
        <position position="124"/>
    </location>
    <ligand>
        <name>Mg(2+)</name>
        <dbReference type="ChEBI" id="CHEBI:18420"/>
    </ligand>
</feature>
<feature type="binding site" evidence="3">
    <location>
        <position position="125"/>
    </location>
    <ligand>
        <name>Mg(2+)</name>
        <dbReference type="ChEBI" id="CHEBI:18420"/>
    </ligand>
</feature>
<feature type="binding site" evidence="3">
    <location>
        <position position="171"/>
    </location>
    <ligand>
        <name>Mg(2+)</name>
        <dbReference type="ChEBI" id="CHEBI:18420"/>
    </ligand>
</feature>
<dbReference type="EC" id="2.1.1.386" evidence="2"/>
<dbReference type="EMBL" id="AADN02033788">
    <property type="status" value="NOT_ANNOTATED_CDS"/>
    <property type="molecule type" value="Genomic_DNA"/>
</dbReference>
<dbReference type="RefSeq" id="NP_001292028.1">
    <property type="nucleotide sequence ID" value="NM_001305099.2"/>
</dbReference>
<dbReference type="RefSeq" id="NP_001383669.1">
    <property type="nucleotide sequence ID" value="NM_001396740.1"/>
</dbReference>
<dbReference type="RefSeq" id="XP_015145803.1">
    <property type="nucleotide sequence ID" value="XM_015290317.1"/>
</dbReference>
<dbReference type="RefSeq" id="XP_040560650.1">
    <property type="nucleotide sequence ID" value="XM_040704716.2"/>
</dbReference>
<dbReference type="RefSeq" id="XP_040560651.1">
    <property type="nucleotide sequence ID" value="XM_040704717.2"/>
</dbReference>
<dbReference type="RefSeq" id="XP_040560652.1">
    <property type="nucleotide sequence ID" value="XM_040704718.2"/>
</dbReference>
<dbReference type="RefSeq" id="XP_046778901.1">
    <property type="nucleotide sequence ID" value="XM_046922945.1"/>
</dbReference>
<dbReference type="RefSeq" id="XP_046778902.1">
    <property type="nucleotide sequence ID" value="XM_046922946.1"/>
</dbReference>
<dbReference type="RefSeq" id="XP_046778903.1">
    <property type="nucleotide sequence ID" value="XM_046922947.1"/>
</dbReference>
<dbReference type="RefSeq" id="XP_046778904.1">
    <property type="nucleotide sequence ID" value="XM_046922948.1"/>
</dbReference>
<dbReference type="RefSeq" id="XP_046800532.1">
    <property type="nucleotide sequence ID" value="XM_046944576.1"/>
</dbReference>
<dbReference type="RefSeq" id="XP_046800533.1">
    <property type="nucleotide sequence ID" value="XM_046944577.1"/>
</dbReference>
<dbReference type="RefSeq" id="XP_046800534.1">
    <property type="nucleotide sequence ID" value="XM_046944578.1"/>
</dbReference>
<dbReference type="SMR" id="E1BVR9"/>
<dbReference type="FunCoup" id="E1BVR9">
    <property type="interactions" value="1"/>
</dbReference>
<dbReference type="STRING" id="9031.ENSGALP00000003026"/>
<dbReference type="PaxDb" id="9031-ENSGALP00000003026"/>
<dbReference type="Ensembl" id="ENSGALT00010028750.1">
    <property type="protein sequence ID" value="ENSGALP00010016540.1"/>
    <property type="gene ID" value="ENSGALG00010012010.1"/>
</dbReference>
<dbReference type="GeneID" id="429055"/>
<dbReference type="KEGG" id="gga:429055"/>
<dbReference type="CTD" id="113802"/>
<dbReference type="VEuPathDB" id="HostDB:geneid_429055"/>
<dbReference type="eggNOG" id="KOG1045">
    <property type="taxonomic scope" value="Eukaryota"/>
</dbReference>
<dbReference type="GeneTree" id="ENSGT00390000004798"/>
<dbReference type="HOGENOM" id="CLU_044646_0_0_1"/>
<dbReference type="InParanoid" id="E1BVR9"/>
<dbReference type="OMA" id="HQFVVDF"/>
<dbReference type="OrthoDB" id="2154311at2759"/>
<dbReference type="PhylomeDB" id="E1BVR9"/>
<dbReference type="TreeFam" id="TF315178"/>
<dbReference type="PRO" id="PR:E1BVR9"/>
<dbReference type="Proteomes" id="UP000000539">
    <property type="component" value="Chromosome 8"/>
</dbReference>
<dbReference type="Bgee" id="ENSGALG00000001959">
    <property type="expression patterns" value="Expressed in spermatid and 10 other cell types or tissues"/>
</dbReference>
<dbReference type="GO" id="GO:0005737">
    <property type="term" value="C:cytoplasm"/>
    <property type="evidence" value="ECO:0000318"/>
    <property type="project" value="GO_Central"/>
</dbReference>
<dbReference type="GO" id="GO:0005634">
    <property type="term" value="C:nucleus"/>
    <property type="evidence" value="ECO:0000318"/>
    <property type="project" value="GO_Central"/>
</dbReference>
<dbReference type="GO" id="GO:0043186">
    <property type="term" value="C:P granule"/>
    <property type="evidence" value="ECO:0000250"/>
    <property type="project" value="UniProtKB"/>
</dbReference>
<dbReference type="GO" id="GO:0046872">
    <property type="term" value="F:metal ion binding"/>
    <property type="evidence" value="ECO:0007669"/>
    <property type="project" value="UniProtKB-KW"/>
</dbReference>
<dbReference type="GO" id="GO:0008171">
    <property type="term" value="F:O-methyltransferase activity"/>
    <property type="evidence" value="ECO:0000250"/>
    <property type="project" value="UniProtKB"/>
</dbReference>
<dbReference type="GO" id="GO:0003723">
    <property type="term" value="F:RNA binding"/>
    <property type="evidence" value="ECO:0007669"/>
    <property type="project" value="UniProtKB-KW"/>
</dbReference>
<dbReference type="GO" id="GO:0008173">
    <property type="term" value="F:RNA methyltransferase activity"/>
    <property type="evidence" value="ECO:0000250"/>
    <property type="project" value="UniProtKB"/>
</dbReference>
<dbReference type="GO" id="GO:0090486">
    <property type="term" value="F:small RNA 2'-O-methyltransferase activity"/>
    <property type="evidence" value="ECO:0007669"/>
    <property type="project" value="Ensembl"/>
</dbReference>
<dbReference type="GO" id="GO:0034587">
    <property type="term" value="P:piRNA processing"/>
    <property type="evidence" value="ECO:0000250"/>
    <property type="project" value="UniProtKB"/>
</dbReference>
<dbReference type="GO" id="GO:0001510">
    <property type="term" value="P:RNA methylation"/>
    <property type="evidence" value="ECO:0000250"/>
    <property type="project" value="UniProtKB"/>
</dbReference>
<dbReference type="GO" id="GO:0030422">
    <property type="term" value="P:siRNA processing"/>
    <property type="evidence" value="ECO:0000318"/>
    <property type="project" value="GO_Central"/>
</dbReference>
<dbReference type="FunFam" id="3.40.50.150:FF:000124">
    <property type="entry name" value="HEN methyltransferase 1"/>
    <property type="match status" value="1"/>
</dbReference>
<dbReference type="Gene3D" id="3.40.50.150">
    <property type="entry name" value="Vaccinia Virus protein VP39"/>
    <property type="match status" value="1"/>
</dbReference>
<dbReference type="InterPro" id="IPR026610">
    <property type="entry name" value="Hen1"/>
</dbReference>
<dbReference type="InterPro" id="IPR029063">
    <property type="entry name" value="SAM-dependent_MTases_sf"/>
</dbReference>
<dbReference type="PANTHER" id="PTHR21404">
    <property type="entry name" value="HEN1"/>
    <property type="match status" value="1"/>
</dbReference>
<dbReference type="PANTHER" id="PTHR21404:SF3">
    <property type="entry name" value="SMALL RNA 2'-O-METHYLTRANSFERASE"/>
    <property type="match status" value="1"/>
</dbReference>
<dbReference type="SUPFAM" id="SSF53335">
    <property type="entry name" value="S-adenosyl-L-methionine-dependent methyltransferases"/>
    <property type="match status" value="1"/>
</dbReference>
<accession>E1BVR9</accession>
<name>HENMT_CHICK</name>
<comment type="function">
    <text evidence="2">Methyltransferase that adds a 2'-O-methyl group at the 3'-end of piRNAs, a class of 24 to 30 nucleotide RNAs that are generated by a Dicer-independent mechanism and are primarily derived from transposons and other repeated sequence elements. This probably protects the 3'-end of piRNAs from uridylation activity and subsequent degradation. Stabilization of piRNAs is essential for gametogenesis.</text>
</comment>
<comment type="catalytic activity">
    <reaction evidence="2">
        <text>small RNA 3'-end nucleotide + S-adenosyl-L-methionine = small RNA 3'-end 2'-O-methylnucleotide + S-adenosyl-L-homocysteine + H(+)</text>
        <dbReference type="Rhea" id="RHEA:37887"/>
        <dbReference type="Rhea" id="RHEA-COMP:10415"/>
        <dbReference type="Rhea" id="RHEA-COMP:10416"/>
        <dbReference type="ChEBI" id="CHEBI:15378"/>
        <dbReference type="ChEBI" id="CHEBI:57856"/>
        <dbReference type="ChEBI" id="CHEBI:59789"/>
        <dbReference type="ChEBI" id="CHEBI:74896"/>
        <dbReference type="ChEBI" id="CHEBI:74898"/>
        <dbReference type="EC" id="2.1.1.386"/>
    </reaction>
</comment>
<comment type="cofactor">
    <cofactor evidence="3">
        <name>Mg(2+)</name>
        <dbReference type="ChEBI" id="CHEBI:18420"/>
    </cofactor>
    <text evidence="3">Binds 1 Mg(2+) ion per subunit.</text>
</comment>
<comment type="subcellular location">
    <subcellularLocation>
        <location evidence="1">Cytoplasm</location>
    </subcellularLocation>
    <text evidence="1">Component of the meiotic nuage, also named P granule, a germ-cell-specific organelle required to repress transposon activity during meiosis.</text>
</comment>
<comment type="similarity">
    <text evidence="4">Belongs to the methyltransferase superfamily. HEN1 family.</text>
</comment>